<reference key="1">
    <citation type="journal article" date="2007" name="Proc. Natl. Acad. Sci. U.S.A.">
        <title>Genome plasticity of BCG and impact on vaccine efficacy.</title>
        <authorList>
            <person name="Brosch R."/>
            <person name="Gordon S.V."/>
            <person name="Garnier T."/>
            <person name="Eiglmeier K."/>
            <person name="Frigui W."/>
            <person name="Valenti P."/>
            <person name="Dos Santos S."/>
            <person name="Duthoy S."/>
            <person name="Lacroix C."/>
            <person name="Garcia-Pelayo C."/>
            <person name="Inwald J.K."/>
            <person name="Golby P."/>
            <person name="Garcia J.N."/>
            <person name="Hewinson R.G."/>
            <person name="Behr M.A."/>
            <person name="Quail M.A."/>
            <person name="Churcher C."/>
            <person name="Barrell B.G."/>
            <person name="Parkhill J."/>
            <person name="Cole S.T."/>
        </authorList>
    </citation>
    <scope>NUCLEOTIDE SEQUENCE [LARGE SCALE GENOMIC DNA]</scope>
    <source>
        <strain>BCG / Pasteur 1173P2</strain>
    </source>
</reference>
<keyword id="KW-0489">Methyltransferase</keyword>
<keyword id="KW-0949">S-adenosyl-L-methionine</keyword>
<keyword id="KW-0808">Transferase</keyword>
<protein>
    <recommendedName>
        <fullName>Putative S-adenosyl-L-methionine-dependent methyltransferase BCG_3469</fullName>
        <ecNumber>2.1.1.-</ecNumber>
    </recommendedName>
</protein>
<proteinExistence type="inferred from homology"/>
<evidence type="ECO:0000250" key="1">
    <source>
        <dbReference type="UniProtKB" id="Q9CCZ4"/>
    </source>
</evidence>
<evidence type="ECO:0000305" key="2"/>
<name>Y3469_MYCBP</name>
<organism>
    <name type="scientific">Mycobacterium bovis (strain BCG / Pasteur 1173P2)</name>
    <dbReference type="NCBI Taxonomy" id="410289"/>
    <lineage>
        <taxon>Bacteria</taxon>
        <taxon>Bacillati</taxon>
        <taxon>Actinomycetota</taxon>
        <taxon>Actinomycetes</taxon>
        <taxon>Mycobacteriales</taxon>
        <taxon>Mycobacteriaceae</taxon>
        <taxon>Mycobacterium</taxon>
        <taxon>Mycobacterium tuberculosis complex</taxon>
    </lineage>
</organism>
<accession>A1KP90</accession>
<sequence>MARPMGKLPSNTRKCAQCAMAEALLEIAGQTINQKDLGRSGRMTRTDNDTWDLASSVGATATMIATARALASRAENPLINDPFAEPLVRAVGIDLFTRLASGELRLEDIGDHATGGRWMIDNIAIRTKFYDDFFGDATTAGIRQVVILAAGLDTRAYRLPWPPGTVVYEIDQPAVIKFKTRALANLNAEPNAERHAVAVDLRNDWPTALKNAGFDPARPTAFSAEGLLSYLPPQGQDRLLDAITALSAPDSRLATQSPLVLDLAEEDEKKMRMKSAAEAWRERGFDLDLTELIYFDQRNDVADYLAGSGWQVTTSTGKELFAAQGLPPFEDDHITRFADRRYISAVLK</sequence>
<feature type="chain" id="PRO_0000361146" description="Putative S-adenosyl-L-methionine-dependent methyltransferase BCG_3469">
    <location>
        <begin position="1"/>
        <end position="348"/>
    </location>
</feature>
<feature type="binding site" evidence="1">
    <location>
        <position position="171"/>
    </location>
    <ligand>
        <name>S-adenosyl-L-methionine</name>
        <dbReference type="ChEBI" id="CHEBI:59789"/>
    </ligand>
</feature>
<feature type="binding site" evidence="1">
    <location>
        <begin position="200"/>
        <end position="201"/>
    </location>
    <ligand>
        <name>S-adenosyl-L-methionine</name>
        <dbReference type="ChEBI" id="CHEBI:59789"/>
    </ligand>
</feature>
<gene>
    <name type="ordered locus">BCG_3469</name>
</gene>
<comment type="function">
    <text evidence="1">Exhibits S-adenosyl-L-methionine-dependent methyltransferase activity.</text>
</comment>
<comment type="similarity">
    <text evidence="2">Belongs to the UPF0677 family.</text>
</comment>
<dbReference type="EC" id="2.1.1.-"/>
<dbReference type="EMBL" id="AM408590">
    <property type="protein sequence ID" value="CAL73458.1"/>
    <property type="molecule type" value="Genomic_DNA"/>
</dbReference>
<dbReference type="SMR" id="A1KP90"/>
<dbReference type="KEGG" id="mbb:BCG_3469"/>
<dbReference type="HOGENOM" id="CLU_056160_2_1_11"/>
<dbReference type="Proteomes" id="UP000001472">
    <property type="component" value="Chromosome"/>
</dbReference>
<dbReference type="GO" id="GO:0008168">
    <property type="term" value="F:methyltransferase activity"/>
    <property type="evidence" value="ECO:0007669"/>
    <property type="project" value="UniProtKB-KW"/>
</dbReference>
<dbReference type="GO" id="GO:0032259">
    <property type="term" value="P:methylation"/>
    <property type="evidence" value="ECO:0007669"/>
    <property type="project" value="UniProtKB-KW"/>
</dbReference>
<dbReference type="FunFam" id="3.40.50.150:FF:000152">
    <property type="entry name" value="S-adenosyl-L-methionine-dependent methyltransferase"/>
    <property type="match status" value="1"/>
</dbReference>
<dbReference type="Gene3D" id="3.40.50.150">
    <property type="entry name" value="Vaccinia Virus protein VP39"/>
    <property type="match status" value="1"/>
</dbReference>
<dbReference type="InterPro" id="IPR007213">
    <property type="entry name" value="Ppm1/Ppm2/Tcmp"/>
</dbReference>
<dbReference type="InterPro" id="IPR029063">
    <property type="entry name" value="SAM-dependent_MTases_sf"/>
</dbReference>
<dbReference type="InterPro" id="IPR011610">
    <property type="entry name" value="SAM_mthyl_Trfase_ML2640-like"/>
</dbReference>
<dbReference type="NCBIfam" id="TIGR00027">
    <property type="entry name" value="mthyl_TIGR00027"/>
    <property type="match status" value="1"/>
</dbReference>
<dbReference type="PANTHER" id="PTHR43619">
    <property type="entry name" value="S-ADENOSYL-L-METHIONINE-DEPENDENT METHYLTRANSFERASE YKTD-RELATED"/>
    <property type="match status" value="1"/>
</dbReference>
<dbReference type="PANTHER" id="PTHR43619:SF2">
    <property type="entry name" value="S-ADENOSYL-L-METHIONINE-DEPENDENT METHYLTRANSFERASES SUPERFAMILY PROTEIN"/>
    <property type="match status" value="1"/>
</dbReference>
<dbReference type="Pfam" id="PF04072">
    <property type="entry name" value="LCM"/>
    <property type="match status" value="1"/>
</dbReference>
<dbReference type="SUPFAM" id="SSF53335">
    <property type="entry name" value="S-adenosyl-L-methionine-dependent methyltransferases"/>
    <property type="match status" value="1"/>
</dbReference>